<gene>
    <name evidence="1" type="primary">dtd</name>
    <name type="ordered locus">SSU98_2096</name>
</gene>
<evidence type="ECO:0000255" key="1">
    <source>
        <dbReference type="HAMAP-Rule" id="MF_00518"/>
    </source>
</evidence>
<organism>
    <name type="scientific">Streptococcus suis (strain 98HAH33)</name>
    <dbReference type="NCBI Taxonomy" id="391296"/>
    <lineage>
        <taxon>Bacteria</taxon>
        <taxon>Bacillati</taxon>
        <taxon>Bacillota</taxon>
        <taxon>Bacilli</taxon>
        <taxon>Lactobacillales</taxon>
        <taxon>Streptococcaceae</taxon>
        <taxon>Streptococcus</taxon>
    </lineage>
</organism>
<accession>A4W4G5</accession>
<proteinExistence type="inferred from homology"/>
<name>DTD_STRS2</name>
<keyword id="KW-0963">Cytoplasm</keyword>
<keyword id="KW-0378">Hydrolase</keyword>
<keyword id="KW-0694">RNA-binding</keyword>
<keyword id="KW-0820">tRNA-binding</keyword>
<protein>
    <recommendedName>
        <fullName evidence="1">D-aminoacyl-tRNA deacylase</fullName>
        <shortName evidence="1">DTD</shortName>
        <ecNumber evidence="1">3.1.1.96</ecNumber>
    </recommendedName>
    <alternativeName>
        <fullName evidence="1">Gly-tRNA(Ala) deacylase</fullName>
    </alternativeName>
</protein>
<sequence length="147" mass="15611">MKIVLQRVSQASVTIEGSIHGQIEQGLLLLVGVGPDDSQEDLDYAVRKIVNMRIFSDEAGKMNKSVQDVAGKILSISQFTLFADTKKGNRPAFTGAAAPALASQLYDAFNQALSAFVPVEVGVFGADMAVSLVNDGPVTIVLDTKNK</sequence>
<reference key="1">
    <citation type="journal article" date="2007" name="PLoS ONE">
        <title>A glimpse of streptococcal toxic shock syndrome from comparative genomics of S. suis 2 Chinese isolates.</title>
        <authorList>
            <person name="Chen C."/>
            <person name="Tang J."/>
            <person name="Dong W."/>
            <person name="Wang C."/>
            <person name="Feng Y."/>
            <person name="Wang J."/>
            <person name="Zheng F."/>
            <person name="Pan X."/>
            <person name="Liu D."/>
            <person name="Li M."/>
            <person name="Song Y."/>
            <person name="Zhu X."/>
            <person name="Sun H."/>
            <person name="Feng T."/>
            <person name="Guo Z."/>
            <person name="Ju A."/>
            <person name="Ge J."/>
            <person name="Dong Y."/>
            <person name="Sun W."/>
            <person name="Jiang Y."/>
            <person name="Wang J."/>
            <person name="Yan J."/>
            <person name="Yang H."/>
            <person name="Wang X."/>
            <person name="Gao G.F."/>
            <person name="Yang R."/>
            <person name="Wang J."/>
            <person name="Yu J."/>
        </authorList>
    </citation>
    <scope>NUCLEOTIDE SEQUENCE [LARGE SCALE GENOMIC DNA]</scope>
    <source>
        <strain>98HAH33</strain>
    </source>
</reference>
<dbReference type="EC" id="3.1.1.96" evidence="1"/>
<dbReference type="EMBL" id="CP000408">
    <property type="protein sequence ID" value="ABP93254.1"/>
    <property type="molecule type" value="Genomic_DNA"/>
</dbReference>
<dbReference type="SMR" id="A4W4G5"/>
<dbReference type="KEGG" id="ssv:SSU98_2096"/>
<dbReference type="HOGENOM" id="CLU_076901_1_0_9"/>
<dbReference type="GO" id="GO:0005737">
    <property type="term" value="C:cytoplasm"/>
    <property type="evidence" value="ECO:0007669"/>
    <property type="project" value="UniProtKB-SubCell"/>
</dbReference>
<dbReference type="GO" id="GO:0051500">
    <property type="term" value="F:D-tyrosyl-tRNA(Tyr) deacylase activity"/>
    <property type="evidence" value="ECO:0007669"/>
    <property type="project" value="TreeGrafter"/>
</dbReference>
<dbReference type="GO" id="GO:0106026">
    <property type="term" value="F:Gly-tRNA(Ala) deacylase activity"/>
    <property type="evidence" value="ECO:0007669"/>
    <property type="project" value="UniProtKB-UniRule"/>
</dbReference>
<dbReference type="GO" id="GO:0043908">
    <property type="term" value="F:Ser(Gly)-tRNA(Ala) hydrolase activity"/>
    <property type="evidence" value="ECO:0007669"/>
    <property type="project" value="UniProtKB-UniRule"/>
</dbReference>
<dbReference type="GO" id="GO:0000049">
    <property type="term" value="F:tRNA binding"/>
    <property type="evidence" value="ECO:0007669"/>
    <property type="project" value="UniProtKB-UniRule"/>
</dbReference>
<dbReference type="GO" id="GO:0019478">
    <property type="term" value="P:D-amino acid catabolic process"/>
    <property type="evidence" value="ECO:0007669"/>
    <property type="project" value="UniProtKB-UniRule"/>
</dbReference>
<dbReference type="CDD" id="cd00563">
    <property type="entry name" value="Dtyr_deacylase"/>
    <property type="match status" value="1"/>
</dbReference>
<dbReference type="FunFam" id="3.50.80.10:FF:000001">
    <property type="entry name" value="D-aminoacyl-tRNA deacylase"/>
    <property type="match status" value="1"/>
</dbReference>
<dbReference type="Gene3D" id="3.50.80.10">
    <property type="entry name" value="D-tyrosyl-tRNA(Tyr) deacylase"/>
    <property type="match status" value="1"/>
</dbReference>
<dbReference type="HAMAP" id="MF_00518">
    <property type="entry name" value="Deacylase_Dtd"/>
    <property type="match status" value="1"/>
</dbReference>
<dbReference type="InterPro" id="IPR003732">
    <property type="entry name" value="Daa-tRNA_deacyls_DTD"/>
</dbReference>
<dbReference type="InterPro" id="IPR023509">
    <property type="entry name" value="DTD-like_sf"/>
</dbReference>
<dbReference type="NCBIfam" id="TIGR00256">
    <property type="entry name" value="D-aminoacyl-tRNA deacylase"/>
    <property type="match status" value="1"/>
</dbReference>
<dbReference type="PANTHER" id="PTHR10472:SF5">
    <property type="entry name" value="D-AMINOACYL-TRNA DEACYLASE 1"/>
    <property type="match status" value="1"/>
</dbReference>
<dbReference type="PANTHER" id="PTHR10472">
    <property type="entry name" value="D-TYROSYL-TRNA TYR DEACYLASE"/>
    <property type="match status" value="1"/>
</dbReference>
<dbReference type="Pfam" id="PF02580">
    <property type="entry name" value="Tyr_Deacylase"/>
    <property type="match status" value="1"/>
</dbReference>
<dbReference type="SUPFAM" id="SSF69500">
    <property type="entry name" value="DTD-like"/>
    <property type="match status" value="1"/>
</dbReference>
<feature type="chain" id="PRO_1000050895" description="D-aminoacyl-tRNA deacylase">
    <location>
        <begin position="1"/>
        <end position="147"/>
    </location>
</feature>
<feature type="short sequence motif" description="Gly-cisPro motif, important for rejection of L-amino acids" evidence="1">
    <location>
        <begin position="136"/>
        <end position="137"/>
    </location>
</feature>
<comment type="function">
    <text evidence="1">An aminoacyl-tRNA editing enzyme that deacylates mischarged D-aminoacyl-tRNAs. Also deacylates mischarged glycyl-tRNA(Ala), protecting cells against glycine mischarging by AlaRS. Acts via tRNA-based rather than protein-based catalysis; rejects L-amino acids rather than detecting D-amino acids in the active site. By recycling D-aminoacyl-tRNA to D-amino acids and free tRNA molecules, this enzyme counteracts the toxicity associated with the formation of D-aminoacyl-tRNA entities in vivo and helps enforce protein L-homochirality.</text>
</comment>
<comment type="catalytic activity">
    <reaction evidence="1">
        <text>glycyl-tRNA(Ala) + H2O = tRNA(Ala) + glycine + H(+)</text>
        <dbReference type="Rhea" id="RHEA:53744"/>
        <dbReference type="Rhea" id="RHEA-COMP:9657"/>
        <dbReference type="Rhea" id="RHEA-COMP:13640"/>
        <dbReference type="ChEBI" id="CHEBI:15377"/>
        <dbReference type="ChEBI" id="CHEBI:15378"/>
        <dbReference type="ChEBI" id="CHEBI:57305"/>
        <dbReference type="ChEBI" id="CHEBI:78442"/>
        <dbReference type="ChEBI" id="CHEBI:78522"/>
        <dbReference type="EC" id="3.1.1.96"/>
    </reaction>
</comment>
<comment type="catalytic activity">
    <reaction evidence="1">
        <text>a D-aminoacyl-tRNA + H2O = a tRNA + a D-alpha-amino acid + H(+)</text>
        <dbReference type="Rhea" id="RHEA:13953"/>
        <dbReference type="Rhea" id="RHEA-COMP:10123"/>
        <dbReference type="Rhea" id="RHEA-COMP:10124"/>
        <dbReference type="ChEBI" id="CHEBI:15377"/>
        <dbReference type="ChEBI" id="CHEBI:15378"/>
        <dbReference type="ChEBI" id="CHEBI:59871"/>
        <dbReference type="ChEBI" id="CHEBI:78442"/>
        <dbReference type="ChEBI" id="CHEBI:79333"/>
        <dbReference type="EC" id="3.1.1.96"/>
    </reaction>
</comment>
<comment type="subunit">
    <text evidence="1">Homodimer.</text>
</comment>
<comment type="subcellular location">
    <subcellularLocation>
        <location evidence="1">Cytoplasm</location>
    </subcellularLocation>
</comment>
<comment type="domain">
    <text evidence="1">A Gly-cisPro motif from one monomer fits into the active site of the other monomer to allow specific chiral rejection of L-amino acids.</text>
</comment>
<comment type="similarity">
    <text evidence="1">Belongs to the DTD family.</text>
</comment>